<name>OFUT2_DROME</name>
<sequence>MRGSWPRLGFPALLLLLHLLTGSDAAVRNGTAKREIGDSRGSSGTCVKGFLQEILPLPATCPPEVLGMRGAVYILYDVNISEGFNLRRDVYIRMAVFVRRLQRRRRFRHVRLVLPPWPRLYHWHSQGLQQSGLPWSHFFDLASLRRYAPVLDYEEFLAEQRLFGNPGAPLVHVGHAFRLQHYEVMLEQGIFRDKFERVTDKPCSEGSLSGGPLLQQAELRVGRFHCVRFQGSAGLLEKLLREAIDEDTAGPEDVDDMRTYALLSAETVLHDHWGDEHFWQARRSMRFARRLEQVAADFRRQALDTTDASAGVQRPAMWELERPKRNAKGGDYLCAHLRRGDFVRSRDATTPTLKAAAQQVKQLLRGFNMTTVFLATDATPYELMELKELFYRFRLVHFAPESNVQRRELKDGGVAVVDQLVCAYARYFVGTYESTFTYRIYEEREILGFTQASTFNTFCKALGGSCSRNAVWPIVWADGDSDSEEDSDPY</sequence>
<accession>Q9W589</accession>
<accession>Q7K729</accession>
<accession>Q9U985</accession>
<comment type="function">
    <text evidence="3">Catalyzes the reaction that attaches fucose through an O-glycosidic linkage to a conserved serine or threonine residue in the consensus sequence C1-X-X-S/T-C2 of thrombospondin type I repeats (TSRs) where C1 and C2 are the first and second cysteines of the repeat, respectively. O-fucosylates members of several protein families including the ADAMTS, the thrombospondin (TSP) and spondin families.</text>
</comment>
<comment type="catalytic activity">
    <reaction evidence="3">
        <text>L-seryl-[protein] + GDP-beta-L-fucose = 3-O-(alpha-L-fucosyl)-L-seryl-[protein] + GDP + H(+)</text>
        <dbReference type="Rhea" id="RHEA:63644"/>
        <dbReference type="Rhea" id="RHEA-COMP:9863"/>
        <dbReference type="Rhea" id="RHEA-COMP:17914"/>
        <dbReference type="ChEBI" id="CHEBI:15378"/>
        <dbReference type="ChEBI" id="CHEBI:29999"/>
        <dbReference type="ChEBI" id="CHEBI:57273"/>
        <dbReference type="ChEBI" id="CHEBI:58189"/>
        <dbReference type="ChEBI" id="CHEBI:189632"/>
        <dbReference type="EC" id="2.4.1.221"/>
    </reaction>
    <physiologicalReaction direction="left-to-right" evidence="3">
        <dbReference type="Rhea" id="RHEA:63645"/>
    </physiologicalReaction>
</comment>
<comment type="catalytic activity">
    <reaction evidence="3">
        <text>L-threonyl-[protein] + GDP-beta-L-fucose = 3-O-(alpha-L-fucosyl)-L-threonyl-[protein] + GDP + H(+)</text>
        <dbReference type="Rhea" id="RHEA:70491"/>
        <dbReference type="Rhea" id="RHEA-COMP:11060"/>
        <dbReference type="Rhea" id="RHEA-COMP:17915"/>
        <dbReference type="ChEBI" id="CHEBI:15378"/>
        <dbReference type="ChEBI" id="CHEBI:30013"/>
        <dbReference type="ChEBI" id="CHEBI:57273"/>
        <dbReference type="ChEBI" id="CHEBI:58189"/>
        <dbReference type="ChEBI" id="CHEBI:189631"/>
        <dbReference type="EC" id="2.4.1.221"/>
    </reaction>
    <physiologicalReaction direction="left-to-right" evidence="3">
        <dbReference type="Rhea" id="RHEA:70492"/>
    </physiologicalReaction>
</comment>
<comment type="activity regulation">
    <text evidence="3">Does not require divalent metal ions for optimal activity.</text>
</comment>
<comment type="pathway">
    <text evidence="3">Protein modification; protein glycosylation.</text>
</comment>
<comment type="subcellular location">
    <subcellularLocation>
        <location evidence="3">Endoplasmic reticulum</location>
    </subcellularLocation>
    <subcellularLocation>
        <location evidence="3">Golgi apparatus</location>
    </subcellularLocation>
    <text evidence="3">Mainly located in the endoplasmic reticulum.</text>
</comment>
<comment type="similarity">
    <text evidence="5">Belongs to the glycosyltransferase 68 family.</text>
</comment>
<comment type="sequence caution" evidence="5">
    <conflict type="erroneous gene model prediction">
        <sequence resource="EMBL-CDS" id="CAB53644"/>
    </conflict>
</comment>
<protein>
    <recommendedName>
        <fullName evidence="5">GDP-fucose protein O-fucosyltransferase 2</fullName>
        <ecNumber evidence="3">2.4.1.221</ecNumber>
    </recommendedName>
    <alternativeName>
        <fullName evidence="4">Peptide-O-fucosyltransferase 2</fullName>
        <shortName>O-FucT-2</shortName>
    </alternativeName>
</protein>
<reference key="1">
    <citation type="journal article" date="2000" name="Science">
        <title>The genome sequence of Drosophila melanogaster.</title>
        <authorList>
            <person name="Adams M.D."/>
            <person name="Celniker S.E."/>
            <person name="Holt R.A."/>
            <person name="Evans C.A."/>
            <person name="Gocayne J.D."/>
            <person name="Amanatides P.G."/>
            <person name="Scherer S.E."/>
            <person name="Li P.W."/>
            <person name="Hoskins R.A."/>
            <person name="Galle R.F."/>
            <person name="George R.A."/>
            <person name="Lewis S.E."/>
            <person name="Richards S."/>
            <person name="Ashburner M."/>
            <person name="Henderson S.N."/>
            <person name="Sutton G.G."/>
            <person name="Wortman J.R."/>
            <person name="Yandell M.D."/>
            <person name="Zhang Q."/>
            <person name="Chen L.X."/>
            <person name="Brandon R.C."/>
            <person name="Rogers Y.-H.C."/>
            <person name="Blazej R.G."/>
            <person name="Champe M."/>
            <person name="Pfeiffer B.D."/>
            <person name="Wan K.H."/>
            <person name="Doyle C."/>
            <person name="Baxter E.G."/>
            <person name="Helt G."/>
            <person name="Nelson C.R."/>
            <person name="Miklos G.L.G."/>
            <person name="Abril J.F."/>
            <person name="Agbayani A."/>
            <person name="An H.-J."/>
            <person name="Andrews-Pfannkoch C."/>
            <person name="Baldwin D."/>
            <person name="Ballew R.M."/>
            <person name="Basu A."/>
            <person name="Baxendale J."/>
            <person name="Bayraktaroglu L."/>
            <person name="Beasley E.M."/>
            <person name="Beeson K.Y."/>
            <person name="Benos P.V."/>
            <person name="Berman B.P."/>
            <person name="Bhandari D."/>
            <person name="Bolshakov S."/>
            <person name="Borkova D."/>
            <person name="Botchan M.R."/>
            <person name="Bouck J."/>
            <person name="Brokstein P."/>
            <person name="Brottier P."/>
            <person name="Burtis K.C."/>
            <person name="Busam D.A."/>
            <person name="Butler H."/>
            <person name="Cadieu E."/>
            <person name="Center A."/>
            <person name="Chandra I."/>
            <person name="Cherry J.M."/>
            <person name="Cawley S."/>
            <person name="Dahlke C."/>
            <person name="Davenport L.B."/>
            <person name="Davies P."/>
            <person name="de Pablos B."/>
            <person name="Delcher A."/>
            <person name="Deng Z."/>
            <person name="Mays A.D."/>
            <person name="Dew I."/>
            <person name="Dietz S.M."/>
            <person name="Dodson K."/>
            <person name="Doup L.E."/>
            <person name="Downes M."/>
            <person name="Dugan-Rocha S."/>
            <person name="Dunkov B.C."/>
            <person name="Dunn P."/>
            <person name="Durbin K.J."/>
            <person name="Evangelista C.C."/>
            <person name="Ferraz C."/>
            <person name="Ferriera S."/>
            <person name="Fleischmann W."/>
            <person name="Fosler C."/>
            <person name="Gabrielian A.E."/>
            <person name="Garg N.S."/>
            <person name="Gelbart W.M."/>
            <person name="Glasser K."/>
            <person name="Glodek A."/>
            <person name="Gong F."/>
            <person name="Gorrell J.H."/>
            <person name="Gu Z."/>
            <person name="Guan P."/>
            <person name="Harris M."/>
            <person name="Harris N.L."/>
            <person name="Harvey D.A."/>
            <person name="Heiman T.J."/>
            <person name="Hernandez J.R."/>
            <person name="Houck J."/>
            <person name="Hostin D."/>
            <person name="Houston K.A."/>
            <person name="Howland T.J."/>
            <person name="Wei M.-H."/>
            <person name="Ibegwam C."/>
            <person name="Jalali M."/>
            <person name="Kalush F."/>
            <person name="Karpen G.H."/>
            <person name="Ke Z."/>
            <person name="Kennison J.A."/>
            <person name="Ketchum K.A."/>
            <person name="Kimmel B.E."/>
            <person name="Kodira C.D."/>
            <person name="Kraft C.L."/>
            <person name="Kravitz S."/>
            <person name="Kulp D."/>
            <person name="Lai Z."/>
            <person name="Lasko P."/>
            <person name="Lei Y."/>
            <person name="Levitsky A.A."/>
            <person name="Li J.H."/>
            <person name="Li Z."/>
            <person name="Liang Y."/>
            <person name="Lin X."/>
            <person name="Liu X."/>
            <person name="Mattei B."/>
            <person name="McIntosh T.C."/>
            <person name="McLeod M.P."/>
            <person name="McPherson D."/>
            <person name="Merkulov G."/>
            <person name="Milshina N.V."/>
            <person name="Mobarry C."/>
            <person name="Morris J."/>
            <person name="Moshrefi A."/>
            <person name="Mount S.M."/>
            <person name="Moy M."/>
            <person name="Murphy B."/>
            <person name="Murphy L."/>
            <person name="Muzny D.M."/>
            <person name="Nelson D.L."/>
            <person name="Nelson D.R."/>
            <person name="Nelson K.A."/>
            <person name="Nixon K."/>
            <person name="Nusskern D.R."/>
            <person name="Pacleb J.M."/>
            <person name="Palazzolo M."/>
            <person name="Pittman G.S."/>
            <person name="Pan S."/>
            <person name="Pollard J."/>
            <person name="Puri V."/>
            <person name="Reese M.G."/>
            <person name="Reinert K."/>
            <person name="Remington K."/>
            <person name="Saunders R.D.C."/>
            <person name="Scheeler F."/>
            <person name="Shen H."/>
            <person name="Shue B.C."/>
            <person name="Siden-Kiamos I."/>
            <person name="Simpson M."/>
            <person name="Skupski M.P."/>
            <person name="Smith T.J."/>
            <person name="Spier E."/>
            <person name="Spradling A.C."/>
            <person name="Stapleton M."/>
            <person name="Strong R."/>
            <person name="Sun E."/>
            <person name="Svirskas R."/>
            <person name="Tector C."/>
            <person name="Turner R."/>
            <person name="Venter E."/>
            <person name="Wang A.H."/>
            <person name="Wang X."/>
            <person name="Wang Z.-Y."/>
            <person name="Wassarman D.A."/>
            <person name="Weinstock G.M."/>
            <person name="Weissenbach J."/>
            <person name="Williams S.M."/>
            <person name="Woodage T."/>
            <person name="Worley K.C."/>
            <person name="Wu D."/>
            <person name="Yang S."/>
            <person name="Yao Q.A."/>
            <person name="Ye J."/>
            <person name="Yeh R.-F."/>
            <person name="Zaveri J.S."/>
            <person name="Zhan M."/>
            <person name="Zhang G."/>
            <person name="Zhao Q."/>
            <person name="Zheng L."/>
            <person name="Zheng X.H."/>
            <person name="Zhong F.N."/>
            <person name="Zhong W."/>
            <person name="Zhou X."/>
            <person name="Zhu S.C."/>
            <person name="Zhu X."/>
            <person name="Smith H.O."/>
            <person name="Gibbs R.A."/>
            <person name="Myers E.W."/>
            <person name="Rubin G.M."/>
            <person name="Venter J.C."/>
        </authorList>
    </citation>
    <scope>NUCLEOTIDE SEQUENCE [LARGE SCALE GENOMIC DNA]</scope>
    <source>
        <strain>Berkeley</strain>
    </source>
</reference>
<reference key="2">
    <citation type="journal article" date="2002" name="Genome Biol.">
        <title>Annotation of the Drosophila melanogaster euchromatic genome: a systematic review.</title>
        <authorList>
            <person name="Misra S."/>
            <person name="Crosby M.A."/>
            <person name="Mungall C.J."/>
            <person name="Matthews B.B."/>
            <person name="Campbell K.S."/>
            <person name="Hradecky P."/>
            <person name="Huang Y."/>
            <person name="Kaminker J.S."/>
            <person name="Millburn G.H."/>
            <person name="Prochnik S.E."/>
            <person name="Smith C.D."/>
            <person name="Tupy J.L."/>
            <person name="Whitfield E.J."/>
            <person name="Bayraktaroglu L."/>
            <person name="Berman B.P."/>
            <person name="Bettencourt B.R."/>
            <person name="Celniker S.E."/>
            <person name="de Grey A.D.N.J."/>
            <person name="Drysdale R.A."/>
            <person name="Harris N.L."/>
            <person name="Richter J."/>
            <person name="Russo S."/>
            <person name="Schroeder A.J."/>
            <person name="Shu S.Q."/>
            <person name="Stapleton M."/>
            <person name="Yamada C."/>
            <person name="Ashburner M."/>
            <person name="Gelbart W.M."/>
            <person name="Rubin G.M."/>
            <person name="Lewis S.E."/>
        </authorList>
    </citation>
    <scope>GENOME REANNOTATION</scope>
    <source>
        <strain>Berkeley</strain>
    </source>
</reference>
<reference key="3">
    <citation type="journal article" date="2000" name="Science">
        <title>From sequence to chromosome: the tip of the X chromosome of D. melanogaster.</title>
        <authorList>
            <person name="Benos P.V."/>
            <person name="Gatt M.K."/>
            <person name="Ashburner M."/>
            <person name="Murphy L."/>
            <person name="Harris D."/>
            <person name="Barrell B.G."/>
            <person name="Ferraz C."/>
            <person name="Vidal S."/>
            <person name="Brun C."/>
            <person name="Demailles J."/>
            <person name="Cadieu E."/>
            <person name="Dreano S."/>
            <person name="Gloux S."/>
            <person name="Lelaure V."/>
            <person name="Mottier S."/>
            <person name="Galibert F."/>
            <person name="Borkova D."/>
            <person name="Minana B."/>
            <person name="Kafatos F.C."/>
            <person name="Louis C."/>
            <person name="Siden-Kiamos I."/>
            <person name="Bolshakov S."/>
            <person name="Papagiannakis G."/>
            <person name="Spanos L."/>
            <person name="Cox S."/>
            <person name="Madueno E."/>
            <person name="de Pablos B."/>
            <person name="Modolell J."/>
            <person name="Peter A."/>
            <person name="Schoettler P."/>
            <person name="Werner M."/>
            <person name="Mourkioti F."/>
            <person name="Beinert N."/>
            <person name="Dowe G."/>
            <person name="Schaefer U."/>
            <person name="Jaeckle H."/>
            <person name="Bucheton A."/>
            <person name="Callister D.M."/>
            <person name="Campbell L.A."/>
            <person name="Darlamitsou A."/>
            <person name="Henderson N.S."/>
            <person name="McMillan P.J."/>
            <person name="Salles C."/>
            <person name="Tait E.A."/>
            <person name="Valenti P."/>
            <person name="Saunders R.D.C."/>
            <person name="Glover D.M."/>
        </authorList>
    </citation>
    <scope>NUCLEOTIDE SEQUENCE [LARGE SCALE GENOMIC DNA]</scope>
    <source>
        <strain>Oregon-R</strain>
    </source>
</reference>
<reference key="4">
    <citation type="journal article" date="2002" name="Genome Biol.">
        <title>A Drosophila full-length cDNA resource.</title>
        <authorList>
            <person name="Stapleton M."/>
            <person name="Carlson J.W."/>
            <person name="Brokstein P."/>
            <person name="Yu C."/>
            <person name="Champe M."/>
            <person name="George R.A."/>
            <person name="Guarin H."/>
            <person name="Kronmiller B."/>
            <person name="Pacleb J.M."/>
            <person name="Park S."/>
            <person name="Wan K.H."/>
            <person name="Rubin G.M."/>
            <person name="Celniker S.E."/>
        </authorList>
    </citation>
    <scope>NUCLEOTIDE SEQUENCE [LARGE SCALE MRNA]</scope>
    <source>
        <strain>Berkeley</strain>
        <tissue>Head</tissue>
    </source>
</reference>
<reference key="5">
    <citation type="journal article" date="2006" name="J. Biol. Chem.">
        <title>Protein O-fucosyltransferase 2 adds O-fucose to thrombospondin type 1 repeats.</title>
        <authorList>
            <person name="Luo Y."/>
            <person name="Koles K."/>
            <person name="Vorndam W."/>
            <person name="Haltiwanger R.S."/>
            <person name="Panin V.M."/>
        </authorList>
    </citation>
    <scope>FUNCTION</scope>
    <scope>CATALYTIC ACTIVITY</scope>
    <scope>ACTIVITY REGULATION</scope>
    <scope>PATHWAY</scope>
    <scope>SUBCELLULAR LOCATION</scope>
    <scope>MUTAGENESIS OF GLU-442 AND GLU-443</scope>
</reference>
<gene>
    <name evidence="4 6" type="primary">O-fut2</name>
    <name evidence="6" type="ORF">CG14789</name>
</gene>
<evidence type="ECO:0000250" key="1">
    <source>
        <dbReference type="UniProtKB" id="Q9Y2G5"/>
    </source>
</evidence>
<evidence type="ECO:0000255" key="2"/>
<evidence type="ECO:0000269" key="3">
    <source>
    </source>
</evidence>
<evidence type="ECO:0000303" key="4">
    <source>
    </source>
</evidence>
<evidence type="ECO:0000305" key="5"/>
<evidence type="ECO:0000312" key="6">
    <source>
        <dbReference type="FlyBase" id="FBgn0027791"/>
    </source>
</evidence>
<keyword id="KW-0119">Carbohydrate metabolism</keyword>
<keyword id="KW-1015">Disulfide bond</keyword>
<keyword id="KW-0256">Endoplasmic reticulum</keyword>
<keyword id="KW-0294">Fucose metabolism</keyword>
<keyword id="KW-0325">Glycoprotein</keyword>
<keyword id="KW-0328">Glycosyltransferase</keyword>
<keyword id="KW-0333">Golgi apparatus</keyword>
<keyword id="KW-1185">Reference proteome</keyword>
<keyword id="KW-0732">Signal</keyword>
<keyword id="KW-0808">Transferase</keyword>
<feature type="signal peptide" evidence="2">
    <location>
        <begin position="1"/>
        <end position="25"/>
    </location>
</feature>
<feature type="chain" id="PRO_0000236806" description="GDP-fucose protein O-fucosyltransferase 2">
    <location>
        <begin position="26"/>
        <end position="490"/>
    </location>
</feature>
<feature type="active site" description="Proton acceptor" evidence="1">
    <location>
        <position position="82"/>
    </location>
</feature>
<feature type="binding site" evidence="1">
    <location>
        <begin position="81"/>
        <end position="85"/>
    </location>
    <ligand>
        <name>GDP-beta-L-fucose</name>
        <dbReference type="ChEBI" id="CHEBI:57273"/>
    </ligand>
</feature>
<feature type="binding site" evidence="1">
    <location>
        <begin position="336"/>
        <end position="338"/>
    </location>
    <ligand>
        <name>GDP-beta-L-fucose</name>
        <dbReference type="ChEBI" id="CHEBI:57273"/>
    </ligand>
</feature>
<feature type="binding site" evidence="1">
    <location>
        <position position="418"/>
    </location>
    <ligand>
        <name>GDP-beta-L-fucose</name>
        <dbReference type="ChEBI" id="CHEBI:57273"/>
    </ligand>
</feature>
<feature type="binding site" evidence="1">
    <location>
        <begin position="435"/>
        <end position="436"/>
    </location>
    <ligand>
        <name>GDP-beta-L-fucose</name>
        <dbReference type="ChEBI" id="CHEBI:57273"/>
    </ligand>
</feature>
<feature type="site" description="Essential for catalytic activity" evidence="1">
    <location>
        <position position="443"/>
    </location>
</feature>
<feature type="glycosylation site" description="N-linked (GlcNAc...) asparagine" evidence="2">
    <location>
        <position position="29"/>
    </location>
</feature>
<feature type="glycosylation site" description="N-linked (GlcNAc...) asparagine" evidence="2">
    <location>
        <position position="79"/>
    </location>
</feature>
<feature type="glycosylation site" description="N-linked (GlcNAc...) asparagine" evidence="2">
    <location>
        <position position="368"/>
    </location>
</feature>
<feature type="disulfide bond" evidence="1">
    <location>
        <begin position="203"/>
        <end position="226"/>
    </location>
</feature>
<feature type="disulfide bond" evidence="1">
    <location>
        <begin position="459"/>
        <end position="466"/>
    </location>
</feature>
<feature type="mutagenesis site" description="Abolishes enzyme activity but no effect on protein folding nor secretion; when associated with A-443." evidence="3">
    <original>E</original>
    <variation>A</variation>
    <location>
        <position position="442"/>
    </location>
</feature>
<feature type="mutagenesis site" description="Abolishes enzyme activity but no effect on protein folding nor secretion; when associated with A-442." evidence="3">
    <original>E</original>
    <variation>A</variation>
    <location>
        <position position="443"/>
    </location>
</feature>
<dbReference type="EC" id="2.4.1.221" evidence="3"/>
<dbReference type="EMBL" id="AE014298">
    <property type="protein sequence ID" value="AAF45629.1"/>
    <property type="molecule type" value="Genomic_DNA"/>
</dbReference>
<dbReference type="EMBL" id="AL031027">
    <property type="status" value="NOT_ANNOTATED_CDS"/>
    <property type="molecule type" value="Genomic_DNA"/>
</dbReference>
<dbReference type="EMBL" id="AL035632">
    <property type="protein sequence ID" value="CAB53644.1"/>
    <property type="status" value="ALT_SEQ"/>
    <property type="molecule type" value="Genomic_DNA"/>
</dbReference>
<dbReference type="EMBL" id="AY047568">
    <property type="protein sequence ID" value="AAK77300.1"/>
    <property type="molecule type" value="mRNA"/>
</dbReference>
<dbReference type="RefSeq" id="NP_569916.1">
    <property type="nucleotide sequence ID" value="NM_130560.4"/>
</dbReference>
<dbReference type="SMR" id="Q9W589"/>
<dbReference type="BioGRID" id="57655">
    <property type="interactions" value="5"/>
</dbReference>
<dbReference type="FunCoup" id="Q9W589">
    <property type="interactions" value="822"/>
</dbReference>
<dbReference type="IntAct" id="Q9W589">
    <property type="interactions" value="6"/>
</dbReference>
<dbReference type="STRING" id="7227.FBpp0070283"/>
<dbReference type="CAZy" id="GT68">
    <property type="family name" value="Glycosyltransferase Family 68"/>
</dbReference>
<dbReference type="GlyCosmos" id="Q9W589">
    <property type="glycosylation" value="3 sites, No reported glycans"/>
</dbReference>
<dbReference type="GlyGen" id="Q9W589">
    <property type="glycosylation" value="3 sites"/>
</dbReference>
<dbReference type="PaxDb" id="7227-FBpp0070283"/>
<dbReference type="DNASU" id="31098"/>
<dbReference type="EnsemblMetazoa" id="FBtr0070296">
    <property type="protein sequence ID" value="FBpp0070283"/>
    <property type="gene ID" value="FBgn0027791"/>
</dbReference>
<dbReference type="GeneID" id="31098"/>
<dbReference type="KEGG" id="dme:Dmel_CG14789"/>
<dbReference type="AGR" id="FB:FBgn0027791"/>
<dbReference type="CTD" id="31098"/>
<dbReference type="FlyBase" id="FBgn0027791">
    <property type="gene designation" value="O-fut2"/>
</dbReference>
<dbReference type="VEuPathDB" id="VectorBase:FBgn0027791"/>
<dbReference type="eggNOG" id="ENOG502QPS6">
    <property type="taxonomic scope" value="Eukaryota"/>
</dbReference>
<dbReference type="GeneTree" id="ENSGT00390000007989"/>
<dbReference type="HOGENOM" id="CLU_033856_0_0_1"/>
<dbReference type="InParanoid" id="Q9W589"/>
<dbReference type="OMA" id="RNAVWPI"/>
<dbReference type="OrthoDB" id="422368at2759"/>
<dbReference type="PhylomeDB" id="Q9W589"/>
<dbReference type="Reactome" id="R-DME-5173214">
    <property type="pathway name" value="O-glycosylation of TSR domain-containing proteins"/>
</dbReference>
<dbReference type="SignaLink" id="Q9W589"/>
<dbReference type="UniPathway" id="UPA00378"/>
<dbReference type="BioGRID-ORCS" id="31098">
    <property type="hits" value="0 hits in 1 CRISPR screen"/>
</dbReference>
<dbReference type="GenomeRNAi" id="31098"/>
<dbReference type="PRO" id="PR:Q9W589"/>
<dbReference type="Proteomes" id="UP000000803">
    <property type="component" value="Chromosome X"/>
</dbReference>
<dbReference type="Bgee" id="FBgn0027791">
    <property type="expression patterns" value="Expressed in adult middle midgut class I enteroendocrine cell in adult midgut (Drosophila) and 59 other cell types or tissues"/>
</dbReference>
<dbReference type="GO" id="GO:0005783">
    <property type="term" value="C:endoplasmic reticulum"/>
    <property type="evidence" value="ECO:0000314"/>
    <property type="project" value="UniProtKB"/>
</dbReference>
<dbReference type="GO" id="GO:0005794">
    <property type="term" value="C:Golgi apparatus"/>
    <property type="evidence" value="ECO:0000314"/>
    <property type="project" value="UniProtKB"/>
</dbReference>
<dbReference type="GO" id="GO:0046922">
    <property type="term" value="F:peptide-O-fucosyltransferase activity"/>
    <property type="evidence" value="ECO:0000314"/>
    <property type="project" value="UniProtKB"/>
</dbReference>
<dbReference type="GO" id="GO:0006004">
    <property type="term" value="P:fucose metabolic process"/>
    <property type="evidence" value="ECO:0007669"/>
    <property type="project" value="UniProtKB-KW"/>
</dbReference>
<dbReference type="GO" id="GO:0036066">
    <property type="term" value="P:protein O-linked fucosylation"/>
    <property type="evidence" value="ECO:0000314"/>
    <property type="project" value="UniProtKB"/>
</dbReference>
<dbReference type="CDD" id="cd11298">
    <property type="entry name" value="O-FucT-2"/>
    <property type="match status" value="1"/>
</dbReference>
<dbReference type="FunFam" id="3.40.50.11340:FF:000007">
    <property type="entry name" value="GDP-fucose protein O-fucosyltransferase 2"/>
    <property type="match status" value="1"/>
</dbReference>
<dbReference type="FunFam" id="3.40.50.11350:FF:000002">
    <property type="entry name" value="GDP-fucose protein O-fucosyltransferase 2"/>
    <property type="match status" value="1"/>
</dbReference>
<dbReference type="Gene3D" id="3.40.50.11340">
    <property type="match status" value="1"/>
</dbReference>
<dbReference type="Gene3D" id="3.40.50.11350">
    <property type="match status" value="1"/>
</dbReference>
<dbReference type="InterPro" id="IPR019378">
    <property type="entry name" value="GDP-Fuc_O-FucTrfase"/>
</dbReference>
<dbReference type="InterPro" id="IPR045130">
    <property type="entry name" value="OFUT2-like"/>
</dbReference>
<dbReference type="PANTHER" id="PTHR13398">
    <property type="entry name" value="GDP-FUCOSE PROTEIN O-FUCOSYLTRANSFERASE 2"/>
    <property type="match status" value="1"/>
</dbReference>
<dbReference type="PANTHER" id="PTHR13398:SF0">
    <property type="entry name" value="GDP-FUCOSE PROTEIN O-FUCOSYLTRANSFERASE 2"/>
    <property type="match status" value="1"/>
</dbReference>
<dbReference type="Pfam" id="PF10250">
    <property type="entry name" value="O-FucT"/>
    <property type="match status" value="1"/>
</dbReference>
<proteinExistence type="evidence at protein level"/>
<organism>
    <name type="scientific">Drosophila melanogaster</name>
    <name type="common">Fruit fly</name>
    <dbReference type="NCBI Taxonomy" id="7227"/>
    <lineage>
        <taxon>Eukaryota</taxon>
        <taxon>Metazoa</taxon>
        <taxon>Ecdysozoa</taxon>
        <taxon>Arthropoda</taxon>
        <taxon>Hexapoda</taxon>
        <taxon>Insecta</taxon>
        <taxon>Pterygota</taxon>
        <taxon>Neoptera</taxon>
        <taxon>Endopterygota</taxon>
        <taxon>Diptera</taxon>
        <taxon>Brachycera</taxon>
        <taxon>Muscomorpha</taxon>
        <taxon>Ephydroidea</taxon>
        <taxon>Drosophilidae</taxon>
        <taxon>Drosophila</taxon>
        <taxon>Sophophora</taxon>
    </lineage>
</organism>